<gene>
    <name evidence="1" type="primary">def1</name>
    <name type="ordered locus">PMT_0384</name>
</gene>
<protein>
    <recommendedName>
        <fullName evidence="1">Peptide deformylase 1</fullName>
        <shortName evidence="1">PDF 1</shortName>
        <ecNumber evidence="1">3.5.1.88</ecNumber>
    </recommendedName>
    <alternativeName>
        <fullName evidence="1">Polypeptide deformylase 1</fullName>
    </alternativeName>
</protein>
<dbReference type="EC" id="3.5.1.88" evidence="1"/>
<dbReference type="EMBL" id="BX548175">
    <property type="protein sequence ID" value="CAE20559.1"/>
    <property type="molecule type" value="Genomic_DNA"/>
</dbReference>
<dbReference type="RefSeq" id="WP_011129763.1">
    <property type="nucleotide sequence ID" value="NC_005071.1"/>
</dbReference>
<dbReference type="SMR" id="Q7V8G6"/>
<dbReference type="KEGG" id="pmt:PMT_0384"/>
<dbReference type="eggNOG" id="COG0242">
    <property type="taxonomic scope" value="Bacteria"/>
</dbReference>
<dbReference type="HOGENOM" id="CLU_061901_5_2_3"/>
<dbReference type="OrthoDB" id="9784988at2"/>
<dbReference type="Proteomes" id="UP000001423">
    <property type="component" value="Chromosome"/>
</dbReference>
<dbReference type="GO" id="GO:0046872">
    <property type="term" value="F:metal ion binding"/>
    <property type="evidence" value="ECO:0007669"/>
    <property type="project" value="UniProtKB-KW"/>
</dbReference>
<dbReference type="GO" id="GO:0042586">
    <property type="term" value="F:peptide deformylase activity"/>
    <property type="evidence" value="ECO:0007669"/>
    <property type="project" value="UniProtKB-UniRule"/>
</dbReference>
<dbReference type="GO" id="GO:0043686">
    <property type="term" value="P:co-translational protein modification"/>
    <property type="evidence" value="ECO:0007669"/>
    <property type="project" value="TreeGrafter"/>
</dbReference>
<dbReference type="GO" id="GO:0006412">
    <property type="term" value="P:translation"/>
    <property type="evidence" value="ECO:0007669"/>
    <property type="project" value="UniProtKB-UniRule"/>
</dbReference>
<dbReference type="CDD" id="cd00487">
    <property type="entry name" value="Pep_deformylase"/>
    <property type="match status" value="1"/>
</dbReference>
<dbReference type="FunFam" id="3.90.45.10:FF:000003">
    <property type="entry name" value="Peptide deformylase"/>
    <property type="match status" value="1"/>
</dbReference>
<dbReference type="Gene3D" id="3.90.45.10">
    <property type="entry name" value="Peptide deformylase"/>
    <property type="match status" value="1"/>
</dbReference>
<dbReference type="HAMAP" id="MF_00163">
    <property type="entry name" value="Pep_deformylase"/>
    <property type="match status" value="1"/>
</dbReference>
<dbReference type="InterPro" id="IPR023635">
    <property type="entry name" value="Peptide_deformylase"/>
</dbReference>
<dbReference type="InterPro" id="IPR036821">
    <property type="entry name" value="Peptide_deformylase_sf"/>
</dbReference>
<dbReference type="NCBIfam" id="NF001159">
    <property type="entry name" value="PRK00150.1-3"/>
    <property type="match status" value="1"/>
</dbReference>
<dbReference type="PANTHER" id="PTHR10458">
    <property type="entry name" value="PEPTIDE DEFORMYLASE"/>
    <property type="match status" value="1"/>
</dbReference>
<dbReference type="PANTHER" id="PTHR10458:SF20">
    <property type="entry name" value="PEPTIDE DEFORMYLASE 1"/>
    <property type="match status" value="1"/>
</dbReference>
<dbReference type="Pfam" id="PF01327">
    <property type="entry name" value="Pep_deformylase"/>
    <property type="match status" value="1"/>
</dbReference>
<dbReference type="PIRSF" id="PIRSF004749">
    <property type="entry name" value="Pep_def"/>
    <property type="match status" value="1"/>
</dbReference>
<dbReference type="PRINTS" id="PR01576">
    <property type="entry name" value="PDEFORMYLASE"/>
</dbReference>
<dbReference type="SUPFAM" id="SSF56420">
    <property type="entry name" value="Peptide deformylase"/>
    <property type="match status" value="1"/>
</dbReference>
<sequence length="192" mass="20788">MAVKEILRMGNPQLRKVSNVVDDASDELIISLIKDLQDTVKAHQGAGLAAPQIGVPLRVVLFGGGGPNPRYPEAPSIPQTLLINPVLTPIGSDLEDGWEGCLSVPGLRGKVSRWSRIHYRALNEDGFEVEHCLEGFPARVIQHECDHLDGVLFPDRLVDSASFGFTGELETAGIIEKLSSAEQKASQQSRAD</sequence>
<proteinExistence type="inferred from homology"/>
<comment type="function">
    <text evidence="1">Removes the formyl group from the N-terminal Met of newly synthesized proteins. Requires at least a dipeptide for an efficient rate of reaction. N-terminal L-methionine is a prerequisite for activity but the enzyme has broad specificity at other positions.</text>
</comment>
<comment type="catalytic activity">
    <reaction evidence="1">
        <text>N-terminal N-formyl-L-methionyl-[peptide] + H2O = N-terminal L-methionyl-[peptide] + formate</text>
        <dbReference type="Rhea" id="RHEA:24420"/>
        <dbReference type="Rhea" id="RHEA-COMP:10639"/>
        <dbReference type="Rhea" id="RHEA-COMP:10640"/>
        <dbReference type="ChEBI" id="CHEBI:15377"/>
        <dbReference type="ChEBI" id="CHEBI:15740"/>
        <dbReference type="ChEBI" id="CHEBI:49298"/>
        <dbReference type="ChEBI" id="CHEBI:64731"/>
        <dbReference type="EC" id="3.5.1.88"/>
    </reaction>
</comment>
<comment type="cofactor">
    <cofactor evidence="1">
        <name>Fe(2+)</name>
        <dbReference type="ChEBI" id="CHEBI:29033"/>
    </cofactor>
    <text evidence="1">Binds 1 Fe(2+) ion.</text>
</comment>
<comment type="similarity">
    <text evidence="1">Belongs to the polypeptide deformylase family.</text>
</comment>
<feature type="chain" id="PRO_0000082816" description="Peptide deformylase 1">
    <location>
        <begin position="1"/>
        <end position="192"/>
    </location>
</feature>
<feature type="active site" evidence="1">
    <location>
        <position position="144"/>
    </location>
</feature>
<feature type="binding site" evidence="1">
    <location>
        <position position="101"/>
    </location>
    <ligand>
        <name>Fe cation</name>
        <dbReference type="ChEBI" id="CHEBI:24875"/>
    </ligand>
</feature>
<feature type="binding site" evidence="1">
    <location>
        <position position="143"/>
    </location>
    <ligand>
        <name>Fe cation</name>
        <dbReference type="ChEBI" id="CHEBI:24875"/>
    </ligand>
</feature>
<feature type="binding site" evidence="1">
    <location>
        <position position="147"/>
    </location>
    <ligand>
        <name>Fe cation</name>
        <dbReference type="ChEBI" id="CHEBI:24875"/>
    </ligand>
</feature>
<evidence type="ECO:0000255" key="1">
    <source>
        <dbReference type="HAMAP-Rule" id="MF_00163"/>
    </source>
</evidence>
<accession>Q7V8G6</accession>
<reference key="1">
    <citation type="journal article" date="2003" name="Nature">
        <title>Genome divergence in two Prochlorococcus ecotypes reflects oceanic niche differentiation.</title>
        <authorList>
            <person name="Rocap G."/>
            <person name="Larimer F.W."/>
            <person name="Lamerdin J.E."/>
            <person name="Malfatti S."/>
            <person name="Chain P."/>
            <person name="Ahlgren N.A."/>
            <person name="Arellano A."/>
            <person name="Coleman M."/>
            <person name="Hauser L."/>
            <person name="Hess W.R."/>
            <person name="Johnson Z.I."/>
            <person name="Land M.L."/>
            <person name="Lindell D."/>
            <person name="Post A.F."/>
            <person name="Regala W."/>
            <person name="Shah M."/>
            <person name="Shaw S.L."/>
            <person name="Steglich C."/>
            <person name="Sullivan M.B."/>
            <person name="Ting C.S."/>
            <person name="Tolonen A."/>
            <person name="Webb E.A."/>
            <person name="Zinser E.R."/>
            <person name="Chisholm S.W."/>
        </authorList>
    </citation>
    <scope>NUCLEOTIDE SEQUENCE [LARGE SCALE GENOMIC DNA]</scope>
    <source>
        <strain>MIT 9313</strain>
    </source>
</reference>
<name>DEF1_PROMM</name>
<keyword id="KW-0378">Hydrolase</keyword>
<keyword id="KW-0408">Iron</keyword>
<keyword id="KW-0479">Metal-binding</keyword>
<keyword id="KW-0648">Protein biosynthesis</keyword>
<keyword id="KW-1185">Reference proteome</keyword>
<organism>
    <name type="scientific">Prochlorococcus marinus (strain MIT 9313)</name>
    <dbReference type="NCBI Taxonomy" id="74547"/>
    <lineage>
        <taxon>Bacteria</taxon>
        <taxon>Bacillati</taxon>
        <taxon>Cyanobacteriota</taxon>
        <taxon>Cyanophyceae</taxon>
        <taxon>Synechococcales</taxon>
        <taxon>Prochlorococcaceae</taxon>
        <taxon>Prochlorococcus</taxon>
    </lineage>
</organism>